<reference key="1">
    <citation type="journal article" date="2003" name="Nat. Biotechnol.">
        <title>The genome sequence of the entomopathogenic bacterium Photorhabdus luminescens.</title>
        <authorList>
            <person name="Duchaud E."/>
            <person name="Rusniok C."/>
            <person name="Frangeul L."/>
            <person name="Buchrieser C."/>
            <person name="Givaudan A."/>
            <person name="Taourit S."/>
            <person name="Bocs S."/>
            <person name="Boursaux-Eude C."/>
            <person name="Chandler M."/>
            <person name="Charles J.-F."/>
            <person name="Dassa E."/>
            <person name="Derose R."/>
            <person name="Derzelle S."/>
            <person name="Freyssinet G."/>
            <person name="Gaudriault S."/>
            <person name="Medigue C."/>
            <person name="Lanois A."/>
            <person name="Powell K."/>
            <person name="Siguier P."/>
            <person name="Vincent R."/>
            <person name="Wingate V."/>
            <person name="Zouine M."/>
            <person name="Glaser P."/>
            <person name="Boemare N."/>
            <person name="Danchin A."/>
            <person name="Kunst F."/>
        </authorList>
    </citation>
    <scope>NUCLEOTIDE SEQUENCE [LARGE SCALE GENOMIC DNA]</scope>
    <source>
        <strain>DSM 15139 / CIP 105565 / TT01</strain>
    </source>
</reference>
<keyword id="KW-0269">Exonuclease</keyword>
<keyword id="KW-0378">Hydrolase</keyword>
<keyword id="KW-0460">Magnesium</keyword>
<keyword id="KW-0479">Metal-binding</keyword>
<keyword id="KW-0540">Nuclease</keyword>
<keyword id="KW-1185">Reference proteome</keyword>
<keyword id="KW-0819">tRNA processing</keyword>
<accession>Q7N3W0</accession>
<organism>
    <name type="scientific">Photorhabdus laumondii subsp. laumondii (strain DSM 15139 / CIP 105565 / TT01)</name>
    <name type="common">Photorhabdus luminescens subsp. laumondii</name>
    <dbReference type="NCBI Taxonomy" id="243265"/>
    <lineage>
        <taxon>Bacteria</taxon>
        <taxon>Pseudomonadati</taxon>
        <taxon>Pseudomonadota</taxon>
        <taxon>Gammaproteobacteria</taxon>
        <taxon>Enterobacterales</taxon>
        <taxon>Morganellaceae</taxon>
        <taxon>Photorhabdus</taxon>
    </lineage>
</organism>
<feature type="chain" id="PRO_0000208967" description="Ribonuclease T">
    <location>
        <begin position="1"/>
        <end position="217"/>
    </location>
</feature>
<feature type="domain" description="Exonuclease" evidence="1">
    <location>
        <begin position="20"/>
        <end position="194"/>
    </location>
</feature>
<feature type="active site" description="Proton donor/acceptor" evidence="1">
    <location>
        <position position="181"/>
    </location>
</feature>
<feature type="binding site" evidence="1">
    <location>
        <position position="23"/>
    </location>
    <ligand>
        <name>Mg(2+)</name>
        <dbReference type="ChEBI" id="CHEBI:18420"/>
        <label>1</label>
        <note>catalytic</note>
    </ligand>
</feature>
<feature type="binding site" evidence="1">
    <location>
        <position position="23"/>
    </location>
    <ligand>
        <name>Mg(2+)</name>
        <dbReference type="ChEBI" id="CHEBI:18420"/>
        <label>2</label>
        <note>catalytic</note>
    </ligand>
</feature>
<feature type="binding site" evidence="1">
    <location>
        <position position="25"/>
    </location>
    <ligand>
        <name>Mg(2+)</name>
        <dbReference type="ChEBI" id="CHEBI:18420"/>
        <label>2</label>
        <note>catalytic</note>
    </ligand>
</feature>
<feature type="binding site" evidence="1">
    <location>
        <position position="181"/>
    </location>
    <ligand>
        <name>Mg(2+)</name>
        <dbReference type="ChEBI" id="CHEBI:18420"/>
        <label>2</label>
        <note>catalytic</note>
    </ligand>
</feature>
<feature type="binding site" evidence="1">
    <location>
        <position position="186"/>
    </location>
    <ligand>
        <name>Mg(2+)</name>
        <dbReference type="ChEBI" id="CHEBI:18420"/>
        <label>2</label>
        <note>catalytic</note>
    </ligand>
</feature>
<feature type="site" description="Important for substrate binding and specificity" evidence="1">
    <location>
        <position position="29"/>
    </location>
</feature>
<feature type="site" description="Important for substrate binding and specificity" evidence="1">
    <location>
        <position position="77"/>
    </location>
</feature>
<feature type="site" description="Important for substrate binding and specificity" evidence="1">
    <location>
        <position position="124"/>
    </location>
</feature>
<feature type="site" description="Important for substrate binding and specificity" evidence="1">
    <location>
        <position position="146"/>
    </location>
</feature>
<sequence length="217" mass="23688">MSDKKAPNVLSGRFRGYYPVVIDVETGGFNAKTDALLEIAAVTLEMDGEGWLTPGESLHFHIEPFEGANLEPAALEFTGIDPLNPLRGAVSEYEALHAIFKMVRKGIKNNHCNRAIIVAHNANFDHSFVMAATERTGLKRNPFHPFATFDTAALGGLVLGQTILAKACITAGIPFDNNQAHSALYDTDRTAELFCEMVNRWKQLGGWPLTTTAEKTG</sequence>
<name>RNT_PHOLL</name>
<comment type="function">
    <text evidence="1">Trims short 3' overhangs of a variety of RNA species, leaving a one or two nucleotide 3' overhang. Responsible for the end-turnover of tRNA: specifically removes the terminal AMP residue from uncharged tRNA (tRNA-C-C-A). Also appears to be involved in tRNA biosynthesis.</text>
</comment>
<comment type="cofactor">
    <cofactor evidence="1">
        <name>Mg(2+)</name>
        <dbReference type="ChEBI" id="CHEBI:18420"/>
    </cofactor>
    <text evidence="1">Binds two Mg(2+) per subunit. The active form of the enzyme binds two Mg(2+) ions in its active site. The first Mg(2+) forms only one salt bridge with the protein.</text>
</comment>
<comment type="subunit">
    <text evidence="1">Homodimer.</text>
</comment>
<comment type="similarity">
    <text evidence="1">Belongs to the RNase T family.</text>
</comment>
<protein>
    <recommendedName>
        <fullName evidence="1">Ribonuclease T</fullName>
        <ecNumber evidence="1">3.1.13.-</ecNumber>
    </recommendedName>
    <alternativeName>
        <fullName evidence="1">Exoribonuclease T</fullName>
        <shortName evidence="1">RNase T</shortName>
    </alternativeName>
</protein>
<proteinExistence type="inferred from homology"/>
<dbReference type="EC" id="3.1.13.-" evidence="1"/>
<dbReference type="EMBL" id="BX571867">
    <property type="protein sequence ID" value="CAE14977.1"/>
    <property type="molecule type" value="Genomic_DNA"/>
</dbReference>
<dbReference type="RefSeq" id="WP_011146825.1">
    <property type="nucleotide sequence ID" value="NC_005126.1"/>
</dbReference>
<dbReference type="SMR" id="Q7N3W0"/>
<dbReference type="STRING" id="243265.plu2603"/>
<dbReference type="GeneID" id="48848862"/>
<dbReference type="KEGG" id="plu:plu2603"/>
<dbReference type="eggNOG" id="COG0847">
    <property type="taxonomic scope" value="Bacteria"/>
</dbReference>
<dbReference type="HOGENOM" id="CLU_082724_0_0_6"/>
<dbReference type="OrthoDB" id="9778264at2"/>
<dbReference type="Proteomes" id="UP000002514">
    <property type="component" value="Chromosome"/>
</dbReference>
<dbReference type="GO" id="GO:0005829">
    <property type="term" value="C:cytosol"/>
    <property type="evidence" value="ECO:0007669"/>
    <property type="project" value="TreeGrafter"/>
</dbReference>
<dbReference type="GO" id="GO:0008408">
    <property type="term" value="F:3'-5' exonuclease activity"/>
    <property type="evidence" value="ECO:0007669"/>
    <property type="project" value="TreeGrafter"/>
</dbReference>
<dbReference type="GO" id="GO:0000287">
    <property type="term" value="F:magnesium ion binding"/>
    <property type="evidence" value="ECO:0007669"/>
    <property type="project" value="UniProtKB-UniRule"/>
</dbReference>
<dbReference type="GO" id="GO:0003676">
    <property type="term" value="F:nucleic acid binding"/>
    <property type="evidence" value="ECO:0007669"/>
    <property type="project" value="InterPro"/>
</dbReference>
<dbReference type="GO" id="GO:0016896">
    <property type="term" value="F:RNA exonuclease activity, producing 5'-phosphomonoesters"/>
    <property type="evidence" value="ECO:0007669"/>
    <property type="project" value="UniProtKB-UniRule"/>
</dbReference>
<dbReference type="GO" id="GO:0045004">
    <property type="term" value="P:DNA replication proofreading"/>
    <property type="evidence" value="ECO:0007669"/>
    <property type="project" value="TreeGrafter"/>
</dbReference>
<dbReference type="GO" id="GO:0008033">
    <property type="term" value="P:tRNA processing"/>
    <property type="evidence" value="ECO:0007669"/>
    <property type="project" value="UniProtKB-KW"/>
</dbReference>
<dbReference type="CDD" id="cd06134">
    <property type="entry name" value="RNaseT"/>
    <property type="match status" value="1"/>
</dbReference>
<dbReference type="FunFam" id="3.30.420.10:FF:000009">
    <property type="entry name" value="Ribonuclease T"/>
    <property type="match status" value="1"/>
</dbReference>
<dbReference type="Gene3D" id="3.30.420.10">
    <property type="entry name" value="Ribonuclease H-like superfamily/Ribonuclease H"/>
    <property type="match status" value="1"/>
</dbReference>
<dbReference type="HAMAP" id="MF_00157">
    <property type="entry name" value="RNase_T"/>
    <property type="match status" value="1"/>
</dbReference>
<dbReference type="InterPro" id="IPR013520">
    <property type="entry name" value="Exonuclease_RNaseT/DNA_pol3"/>
</dbReference>
<dbReference type="InterPro" id="IPR005987">
    <property type="entry name" value="RNase_T"/>
</dbReference>
<dbReference type="InterPro" id="IPR012337">
    <property type="entry name" value="RNaseH-like_sf"/>
</dbReference>
<dbReference type="InterPro" id="IPR036397">
    <property type="entry name" value="RNaseH_sf"/>
</dbReference>
<dbReference type="NCBIfam" id="TIGR01298">
    <property type="entry name" value="RNaseT"/>
    <property type="match status" value="1"/>
</dbReference>
<dbReference type="PANTHER" id="PTHR30231">
    <property type="entry name" value="DNA POLYMERASE III SUBUNIT EPSILON"/>
    <property type="match status" value="1"/>
</dbReference>
<dbReference type="PANTHER" id="PTHR30231:SF2">
    <property type="entry name" value="RIBONUCLEASE T"/>
    <property type="match status" value="1"/>
</dbReference>
<dbReference type="Pfam" id="PF00929">
    <property type="entry name" value="RNase_T"/>
    <property type="match status" value="1"/>
</dbReference>
<dbReference type="SMART" id="SM00479">
    <property type="entry name" value="EXOIII"/>
    <property type="match status" value="1"/>
</dbReference>
<dbReference type="SUPFAM" id="SSF53098">
    <property type="entry name" value="Ribonuclease H-like"/>
    <property type="match status" value="1"/>
</dbReference>
<evidence type="ECO:0000255" key="1">
    <source>
        <dbReference type="HAMAP-Rule" id="MF_00157"/>
    </source>
</evidence>
<gene>
    <name evidence="1" type="primary">rnt</name>
    <name type="ordered locus">plu2603</name>
</gene>